<accession>Q940A6</accession>
<accession>F4JT70</accession>
<accession>O65715</accession>
<keyword id="KW-0150">Chloroplast</keyword>
<keyword id="KW-0934">Plastid</keyword>
<keyword id="KW-1185">Reference proteome</keyword>
<keyword id="KW-0677">Repeat</keyword>
<keyword id="KW-0809">Transit peptide</keyword>
<sequence length="838" mass="94617">MAALLYFPKISSQMTSSHFISFSPMDLRRLSRASYLFTRRLKFIAKSRKCFHTSRYLQQCVHRPDKSEETSSDRHLHERLSSVLSKRSLDYEQCKQLITVLSPLEFDRLFPEFRSKVNPKTALDFFRLASDSFSFSFSLRSYCLLIGLLLDANLLSAARVVLIRLINGNVPVLPCGLRDSRVAIADAMASLSLCFDEEIRRKMSDLLIEVYCTQFKRDGCYLALDVFPVLANKGMFPSKTTCNILLTSLVRANEFQKCCEAFDVVCKGVSPDVYLFTTAINAFCKGGKVEEAVKLFSKMEEAGVAPNVVTFNTVIDGLGMCGRYDEAFMFKEKMVERGMEPTLITYSILVKGLTRAKRIGDAYFVLKEMTKKGFPPNVIVYNNLIDSFIEAGSLNKAIEIKDLMVSKGLSLTSSTYNTLIKGYCKNGQADNAERLLKEMLSIGFNVNQGSFTSVICLLCSHLMFDSALRFVGEMLLRNMSPGGGLLTTLISGLCKHGKHSKALELWFQFLNKGFVVDTRTSNALLHGLCEAGKLDEAFRIQKEILGRGCVMDRVSYNTLISGCCGKKKLDEAFMFLDEMVKRGLKPDNYTYSILICGLFNMNKVEEAIQFWDDCKRNGMLPDVYTYSVMIDGCCKAERTEEGQEFFDEMMSKNVQPNTVVYNHLIRAYCRSGRLSMALELREDMKHKGISPNSATYTSLIKGMSIISRVEEAKLLFEEMRMEGLEPNVFHYTALIDGYGKLGQMVKVECLLREMHSKNVHPNKITYTVMIGGYARDGNVTEASRLLNEMREKGIVPDSITYKEFIYGYLKQGGVLEAFKGSDEENYAAIIEGWNKLIQ</sequence>
<proteinExistence type="evidence at transcript level"/>
<name>PP325_ARATH</name>
<gene>
    <name type="ordered locus">At4g19440</name>
    <name type="ORF">T5K18.220</name>
</gene>
<reference key="1">
    <citation type="journal article" date="1999" name="Nature">
        <title>Sequence and analysis of chromosome 4 of the plant Arabidopsis thaliana.</title>
        <authorList>
            <person name="Mayer K.F.X."/>
            <person name="Schueller C."/>
            <person name="Wambutt R."/>
            <person name="Murphy G."/>
            <person name="Volckaert G."/>
            <person name="Pohl T."/>
            <person name="Duesterhoeft A."/>
            <person name="Stiekema W."/>
            <person name="Entian K.-D."/>
            <person name="Terryn N."/>
            <person name="Harris B."/>
            <person name="Ansorge W."/>
            <person name="Brandt P."/>
            <person name="Grivell L.A."/>
            <person name="Rieger M."/>
            <person name="Weichselgartner M."/>
            <person name="de Simone V."/>
            <person name="Obermaier B."/>
            <person name="Mache R."/>
            <person name="Mueller M."/>
            <person name="Kreis M."/>
            <person name="Delseny M."/>
            <person name="Puigdomenech P."/>
            <person name="Watson M."/>
            <person name="Schmidtheini T."/>
            <person name="Reichert B."/>
            <person name="Portetelle D."/>
            <person name="Perez-Alonso M."/>
            <person name="Boutry M."/>
            <person name="Bancroft I."/>
            <person name="Vos P."/>
            <person name="Hoheisel J."/>
            <person name="Zimmermann W."/>
            <person name="Wedler H."/>
            <person name="Ridley P."/>
            <person name="Langham S.-A."/>
            <person name="McCullagh B."/>
            <person name="Bilham L."/>
            <person name="Robben J."/>
            <person name="van der Schueren J."/>
            <person name="Grymonprez B."/>
            <person name="Chuang Y.-J."/>
            <person name="Vandenbussche F."/>
            <person name="Braeken M."/>
            <person name="Weltjens I."/>
            <person name="Voet M."/>
            <person name="Bastiaens I."/>
            <person name="Aert R."/>
            <person name="Defoor E."/>
            <person name="Weitzenegger T."/>
            <person name="Bothe G."/>
            <person name="Ramsperger U."/>
            <person name="Hilbert H."/>
            <person name="Braun M."/>
            <person name="Holzer E."/>
            <person name="Brandt A."/>
            <person name="Peters S."/>
            <person name="van Staveren M."/>
            <person name="Dirkse W."/>
            <person name="Mooijman P."/>
            <person name="Klein Lankhorst R."/>
            <person name="Rose M."/>
            <person name="Hauf J."/>
            <person name="Koetter P."/>
            <person name="Berneiser S."/>
            <person name="Hempel S."/>
            <person name="Feldpausch M."/>
            <person name="Lamberth S."/>
            <person name="Van den Daele H."/>
            <person name="De Keyser A."/>
            <person name="Buysshaert C."/>
            <person name="Gielen J."/>
            <person name="Villarroel R."/>
            <person name="De Clercq R."/>
            <person name="van Montagu M."/>
            <person name="Rogers J."/>
            <person name="Cronin A."/>
            <person name="Quail M.A."/>
            <person name="Bray-Allen S."/>
            <person name="Clark L."/>
            <person name="Doggett J."/>
            <person name="Hall S."/>
            <person name="Kay M."/>
            <person name="Lennard N."/>
            <person name="McLay K."/>
            <person name="Mayes R."/>
            <person name="Pettett A."/>
            <person name="Rajandream M.A."/>
            <person name="Lyne M."/>
            <person name="Benes V."/>
            <person name="Rechmann S."/>
            <person name="Borkova D."/>
            <person name="Bloecker H."/>
            <person name="Scharfe M."/>
            <person name="Grimm M."/>
            <person name="Loehnert T.-H."/>
            <person name="Dose S."/>
            <person name="de Haan M."/>
            <person name="Maarse A.C."/>
            <person name="Schaefer M."/>
            <person name="Mueller-Auer S."/>
            <person name="Gabel C."/>
            <person name="Fuchs M."/>
            <person name="Fartmann B."/>
            <person name="Granderath K."/>
            <person name="Dauner D."/>
            <person name="Herzl A."/>
            <person name="Neumann S."/>
            <person name="Argiriou A."/>
            <person name="Vitale D."/>
            <person name="Liguori R."/>
            <person name="Piravandi E."/>
            <person name="Massenet O."/>
            <person name="Quigley F."/>
            <person name="Clabauld G."/>
            <person name="Muendlein A."/>
            <person name="Felber R."/>
            <person name="Schnabl S."/>
            <person name="Hiller R."/>
            <person name="Schmidt W."/>
            <person name="Lecharny A."/>
            <person name="Aubourg S."/>
            <person name="Chefdor F."/>
            <person name="Cooke R."/>
            <person name="Berger C."/>
            <person name="Monfort A."/>
            <person name="Casacuberta E."/>
            <person name="Gibbons T."/>
            <person name="Weber N."/>
            <person name="Vandenbol M."/>
            <person name="Bargues M."/>
            <person name="Terol J."/>
            <person name="Torres A."/>
            <person name="Perez-Perez A."/>
            <person name="Purnelle B."/>
            <person name="Bent E."/>
            <person name="Johnson S."/>
            <person name="Tacon D."/>
            <person name="Jesse T."/>
            <person name="Heijnen L."/>
            <person name="Schwarz S."/>
            <person name="Scholler P."/>
            <person name="Heber S."/>
            <person name="Francs P."/>
            <person name="Bielke C."/>
            <person name="Frishman D."/>
            <person name="Haase D."/>
            <person name="Lemcke K."/>
            <person name="Mewes H.-W."/>
            <person name="Stocker S."/>
            <person name="Zaccaria P."/>
            <person name="Bevan M."/>
            <person name="Wilson R.K."/>
            <person name="de la Bastide M."/>
            <person name="Habermann K."/>
            <person name="Parnell L."/>
            <person name="Dedhia N."/>
            <person name="Gnoj L."/>
            <person name="Schutz K."/>
            <person name="Huang E."/>
            <person name="Spiegel L."/>
            <person name="Sekhon M."/>
            <person name="Murray J."/>
            <person name="Sheet P."/>
            <person name="Cordes M."/>
            <person name="Abu-Threideh J."/>
            <person name="Stoneking T."/>
            <person name="Kalicki J."/>
            <person name="Graves T."/>
            <person name="Harmon G."/>
            <person name="Edwards J."/>
            <person name="Latreille P."/>
            <person name="Courtney L."/>
            <person name="Cloud J."/>
            <person name="Abbott A."/>
            <person name="Scott K."/>
            <person name="Johnson D."/>
            <person name="Minx P."/>
            <person name="Bentley D."/>
            <person name="Fulton B."/>
            <person name="Miller N."/>
            <person name="Greco T."/>
            <person name="Kemp K."/>
            <person name="Kramer J."/>
            <person name="Fulton L."/>
            <person name="Mardis E."/>
            <person name="Dante M."/>
            <person name="Pepin K."/>
            <person name="Hillier L.W."/>
            <person name="Nelson J."/>
            <person name="Spieth J."/>
            <person name="Ryan E."/>
            <person name="Andrews S."/>
            <person name="Geisel C."/>
            <person name="Layman D."/>
            <person name="Du H."/>
            <person name="Ali J."/>
            <person name="Berghoff A."/>
            <person name="Jones K."/>
            <person name="Drone K."/>
            <person name="Cotton M."/>
            <person name="Joshu C."/>
            <person name="Antonoiu B."/>
            <person name="Zidanic M."/>
            <person name="Strong C."/>
            <person name="Sun H."/>
            <person name="Lamar B."/>
            <person name="Yordan C."/>
            <person name="Ma P."/>
            <person name="Zhong J."/>
            <person name="Preston R."/>
            <person name="Vil D."/>
            <person name="Shekher M."/>
            <person name="Matero A."/>
            <person name="Shah R."/>
            <person name="Swaby I.K."/>
            <person name="O'Shaughnessy A."/>
            <person name="Rodriguez M."/>
            <person name="Hoffman J."/>
            <person name="Till S."/>
            <person name="Granat S."/>
            <person name="Shohdy N."/>
            <person name="Hasegawa A."/>
            <person name="Hameed A."/>
            <person name="Lodhi M."/>
            <person name="Johnson A."/>
            <person name="Chen E."/>
            <person name="Marra M.A."/>
            <person name="Martienssen R."/>
            <person name="McCombie W.R."/>
        </authorList>
    </citation>
    <scope>NUCLEOTIDE SEQUENCE [LARGE SCALE GENOMIC DNA]</scope>
    <source>
        <strain>cv. Columbia</strain>
    </source>
</reference>
<reference key="2">
    <citation type="journal article" date="2017" name="Plant J.">
        <title>Araport11: a complete reannotation of the Arabidopsis thaliana reference genome.</title>
        <authorList>
            <person name="Cheng C.Y."/>
            <person name="Krishnakumar V."/>
            <person name="Chan A.P."/>
            <person name="Thibaud-Nissen F."/>
            <person name="Schobel S."/>
            <person name="Town C.D."/>
        </authorList>
    </citation>
    <scope>GENOME REANNOTATION</scope>
    <source>
        <strain>cv. Columbia</strain>
    </source>
</reference>
<reference key="3">
    <citation type="journal article" date="2003" name="Science">
        <title>Empirical analysis of transcriptional activity in the Arabidopsis genome.</title>
        <authorList>
            <person name="Yamada K."/>
            <person name="Lim J."/>
            <person name="Dale J.M."/>
            <person name="Chen H."/>
            <person name="Shinn P."/>
            <person name="Palm C.J."/>
            <person name="Southwick A.M."/>
            <person name="Wu H.C."/>
            <person name="Kim C.J."/>
            <person name="Nguyen M."/>
            <person name="Pham P.K."/>
            <person name="Cheuk R.F."/>
            <person name="Karlin-Newmann G."/>
            <person name="Liu S.X."/>
            <person name="Lam B."/>
            <person name="Sakano H."/>
            <person name="Wu T."/>
            <person name="Yu G."/>
            <person name="Miranda M."/>
            <person name="Quach H.L."/>
            <person name="Tripp M."/>
            <person name="Chang C.H."/>
            <person name="Lee J.M."/>
            <person name="Toriumi M.J."/>
            <person name="Chan M.M."/>
            <person name="Tang C.C."/>
            <person name="Onodera C.S."/>
            <person name="Deng J.M."/>
            <person name="Akiyama K."/>
            <person name="Ansari Y."/>
            <person name="Arakawa T."/>
            <person name="Banh J."/>
            <person name="Banno F."/>
            <person name="Bowser L."/>
            <person name="Brooks S.Y."/>
            <person name="Carninci P."/>
            <person name="Chao Q."/>
            <person name="Choy N."/>
            <person name="Enju A."/>
            <person name="Goldsmith A.D."/>
            <person name="Gurjal M."/>
            <person name="Hansen N.F."/>
            <person name="Hayashizaki Y."/>
            <person name="Johnson-Hopson C."/>
            <person name="Hsuan V.W."/>
            <person name="Iida K."/>
            <person name="Karnes M."/>
            <person name="Khan S."/>
            <person name="Koesema E."/>
            <person name="Ishida J."/>
            <person name="Jiang P.X."/>
            <person name="Jones T."/>
            <person name="Kawai J."/>
            <person name="Kamiya A."/>
            <person name="Meyers C."/>
            <person name="Nakajima M."/>
            <person name="Narusaka M."/>
            <person name="Seki M."/>
            <person name="Sakurai T."/>
            <person name="Satou M."/>
            <person name="Tamse R."/>
            <person name="Vaysberg M."/>
            <person name="Wallender E.K."/>
            <person name="Wong C."/>
            <person name="Yamamura Y."/>
            <person name="Yuan S."/>
            <person name="Shinozaki K."/>
            <person name="Davis R.W."/>
            <person name="Theologis A."/>
            <person name="Ecker J.R."/>
        </authorList>
    </citation>
    <scope>NUCLEOTIDE SEQUENCE [LARGE SCALE MRNA] OF 2-838</scope>
    <source>
        <strain>cv. Columbia</strain>
    </source>
</reference>
<reference key="4">
    <citation type="journal article" date="2004" name="Plant Cell">
        <title>Genome-wide analysis of Arabidopsis pentatricopeptide repeat proteins reveals their essential role in organelle biogenesis.</title>
        <authorList>
            <person name="Lurin C."/>
            <person name="Andres C."/>
            <person name="Aubourg S."/>
            <person name="Bellaoui M."/>
            <person name="Bitton F."/>
            <person name="Bruyere C."/>
            <person name="Caboche M."/>
            <person name="Debast C."/>
            <person name="Gualberto J."/>
            <person name="Hoffmann B."/>
            <person name="Lecharny A."/>
            <person name="Le Ret M."/>
            <person name="Martin-Magniette M.-L."/>
            <person name="Mireau H."/>
            <person name="Peeters N."/>
            <person name="Renou J.-P."/>
            <person name="Szurek B."/>
            <person name="Taconnat L."/>
            <person name="Small I."/>
        </authorList>
    </citation>
    <scope>GENE FAMILY</scope>
</reference>
<comment type="subcellular location">
    <subcellularLocation>
        <location evidence="2">Plastid</location>
        <location evidence="2">Chloroplast</location>
    </subcellularLocation>
</comment>
<comment type="similarity">
    <text evidence="2">Belongs to the PPR family. P subfamily.</text>
</comment>
<comment type="sequence caution" evidence="2">
    <conflict type="erroneous initiation">
        <sequence resource="EMBL-CDS" id="AAL07224"/>
    </conflict>
    <text>Truncated N-terminus.</text>
</comment>
<comment type="sequence caution" evidence="2">
    <conflict type="erroneous initiation">
        <sequence resource="EMBL-CDS" id="CAA18631"/>
    </conflict>
    <text>Truncated N-terminus.</text>
</comment>
<comment type="sequence caution" evidence="2">
    <conflict type="erroneous initiation">
        <sequence resource="EMBL-CDS" id="CAB78946"/>
    </conflict>
    <text>Truncated N-terminus.</text>
</comment>
<comment type="online information" name="Pentatricopeptide repeat proteins">
    <link uri="https://ppr.plantenergy.uwa.edu.au"/>
</comment>
<evidence type="ECO:0000255" key="1"/>
<evidence type="ECO:0000305" key="2"/>
<dbReference type="EMBL" id="AL022580">
    <property type="protein sequence ID" value="CAA18631.1"/>
    <property type="status" value="ALT_INIT"/>
    <property type="molecule type" value="Genomic_DNA"/>
</dbReference>
<dbReference type="EMBL" id="AL161550">
    <property type="protein sequence ID" value="CAB78946.1"/>
    <property type="status" value="ALT_INIT"/>
    <property type="molecule type" value="Genomic_DNA"/>
</dbReference>
<dbReference type="EMBL" id="CP002687">
    <property type="protein sequence ID" value="AEE84182.2"/>
    <property type="molecule type" value="Genomic_DNA"/>
</dbReference>
<dbReference type="EMBL" id="CP002687">
    <property type="protein sequence ID" value="AEE84183.2"/>
    <property type="molecule type" value="Genomic_DNA"/>
</dbReference>
<dbReference type="EMBL" id="CP002687">
    <property type="protein sequence ID" value="ANM67318.1"/>
    <property type="molecule type" value="Genomic_DNA"/>
</dbReference>
<dbReference type="EMBL" id="CP002687">
    <property type="protein sequence ID" value="ANM67319.1"/>
    <property type="molecule type" value="Genomic_DNA"/>
</dbReference>
<dbReference type="EMBL" id="AY056145">
    <property type="protein sequence ID" value="AAL07224.1"/>
    <property type="status" value="ALT_INIT"/>
    <property type="molecule type" value="mRNA"/>
</dbReference>
<dbReference type="PIR" id="T05827">
    <property type="entry name" value="T05827"/>
</dbReference>
<dbReference type="RefSeq" id="NP_001190771.2">
    <property type="nucleotide sequence ID" value="NM_001203842.2"/>
</dbReference>
<dbReference type="RefSeq" id="NP_001329153.1">
    <property type="nucleotide sequence ID" value="NM_001341339.1"/>
</dbReference>
<dbReference type="RefSeq" id="NP_001329154.1">
    <property type="nucleotide sequence ID" value="NM_001341340.1"/>
</dbReference>
<dbReference type="RefSeq" id="NP_567587.2">
    <property type="nucleotide sequence ID" value="NM_118064.2"/>
</dbReference>
<dbReference type="SMR" id="Q940A6"/>
<dbReference type="FunCoup" id="Q940A6">
    <property type="interactions" value="442"/>
</dbReference>
<dbReference type="STRING" id="3702.Q940A6"/>
<dbReference type="iPTMnet" id="Q940A6"/>
<dbReference type="PaxDb" id="3702-AT4G19440.1"/>
<dbReference type="ProteomicsDB" id="249226"/>
<dbReference type="EnsemblPlants" id="AT4G19440.1">
    <property type="protein sequence ID" value="AT4G19440.1"/>
    <property type="gene ID" value="AT4G19440"/>
</dbReference>
<dbReference type="EnsemblPlants" id="AT4G19440.2">
    <property type="protein sequence ID" value="AT4G19440.2"/>
    <property type="gene ID" value="AT4G19440"/>
</dbReference>
<dbReference type="EnsemblPlants" id="AT4G19440.3">
    <property type="protein sequence ID" value="AT4G19440.3"/>
    <property type="gene ID" value="AT4G19440"/>
</dbReference>
<dbReference type="EnsemblPlants" id="AT4G19440.4">
    <property type="protein sequence ID" value="AT4G19440.4"/>
    <property type="gene ID" value="AT4G19440"/>
</dbReference>
<dbReference type="GeneID" id="827685"/>
<dbReference type="Gramene" id="AT4G19440.1">
    <property type="protein sequence ID" value="AT4G19440.1"/>
    <property type="gene ID" value="AT4G19440"/>
</dbReference>
<dbReference type="Gramene" id="AT4G19440.2">
    <property type="protein sequence ID" value="AT4G19440.2"/>
    <property type="gene ID" value="AT4G19440"/>
</dbReference>
<dbReference type="Gramene" id="AT4G19440.3">
    <property type="protein sequence ID" value="AT4G19440.3"/>
    <property type="gene ID" value="AT4G19440"/>
</dbReference>
<dbReference type="Gramene" id="AT4G19440.4">
    <property type="protein sequence ID" value="AT4G19440.4"/>
    <property type="gene ID" value="AT4G19440"/>
</dbReference>
<dbReference type="KEGG" id="ath:AT4G19440"/>
<dbReference type="Araport" id="AT4G19440"/>
<dbReference type="TAIR" id="AT4G19440"/>
<dbReference type="eggNOG" id="KOG4197">
    <property type="taxonomic scope" value="Eukaryota"/>
</dbReference>
<dbReference type="HOGENOM" id="CLU_002706_49_12_1"/>
<dbReference type="InParanoid" id="Q940A6"/>
<dbReference type="OMA" id="VYTYGVM"/>
<dbReference type="PhylomeDB" id="Q940A6"/>
<dbReference type="PRO" id="PR:Q940A6"/>
<dbReference type="Proteomes" id="UP000006548">
    <property type="component" value="Chromosome 4"/>
</dbReference>
<dbReference type="ExpressionAtlas" id="Q940A6">
    <property type="expression patterns" value="baseline and differential"/>
</dbReference>
<dbReference type="GO" id="GO:0009507">
    <property type="term" value="C:chloroplast"/>
    <property type="evidence" value="ECO:0007669"/>
    <property type="project" value="UniProtKB-SubCell"/>
</dbReference>
<dbReference type="Gene3D" id="1.25.40.10">
    <property type="entry name" value="Tetratricopeptide repeat domain"/>
    <property type="match status" value="5"/>
</dbReference>
<dbReference type="InterPro" id="IPR002885">
    <property type="entry name" value="Pentatricopeptide_rpt"/>
</dbReference>
<dbReference type="InterPro" id="IPR011990">
    <property type="entry name" value="TPR-like_helical_dom_sf"/>
</dbReference>
<dbReference type="NCBIfam" id="TIGR00756">
    <property type="entry name" value="PPR"/>
    <property type="match status" value="14"/>
</dbReference>
<dbReference type="PANTHER" id="PTHR47938:SF7">
    <property type="entry name" value="PENTACOTRIPEPTIDE-REPEAT REGION OF PRORP DOMAIN-CONTAINING PROTEIN"/>
    <property type="match status" value="1"/>
</dbReference>
<dbReference type="PANTHER" id="PTHR47938">
    <property type="entry name" value="RESPIRATORY COMPLEX I CHAPERONE (CIA84), PUTATIVE (AFU_ORTHOLOGUE AFUA_2G06020)-RELATED"/>
    <property type="match status" value="1"/>
</dbReference>
<dbReference type="Pfam" id="PF01535">
    <property type="entry name" value="PPR"/>
    <property type="match status" value="1"/>
</dbReference>
<dbReference type="Pfam" id="PF12854">
    <property type="entry name" value="PPR_1"/>
    <property type="match status" value="2"/>
</dbReference>
<dbReference type="Pfam" id="PF13041">
    <property type="entry name" value="PPR_2"/>
    <property type="match status" value="6"/>
</dbReference>
<dbReference type="SUPFAM" id="SSF81901">
    <property type="entry name" value="HCP-like"/>
    <property type="match status" value="1"/>
</dbReference>
<dbReference type="PROSITE" id="PS51375">
    <property type="entry name" value="PPR"/>
    <property type="match status" value="17"/>
</dbReference>
<organism>
    <name type="scientific">Arabidopsis thaliana</name>
    <name type="common">Mouse-ear cress</name>
    <dbReference type="NCBI Taxonomy" id="3702"/>
    <lineage>
        <taxon>Eukaryota</taxon>
        <taxon>Viridiplantae</taxon>
        <taxon>Streptophyta</taxon>
        <taxon>Embryophyta</taxon>
        <taxon>Tracheophyta</taxon>
        <taxon>Spermatophyta</taxon>
        <taxon>Magnoliopsida</taxon>
        <taxon>eudicotyledons</taxon>
        <taxon>Gunneridae</taxon>
        <taxon>Pentapetalae</taxon>
        <taxon>rosids</taxon>
        <taxon>malvids</taxon>
        <taxon>Brassicales</taxon>
        <taxon>Brassicaceae</taxon>
        <taxon>Camelineae</taxon>
        <taxon>Arabidopsis</taxon>
    </lineage>
</organism>
<feature type="transit peptide" description="Chloroplast" evidence="1">
    <location>
        <begin position="1"/>
        <end position="32"/>
    </location>
</feature>
<feature type="chain" id="PRO_0000363442" description="Pentatricopeptide repeat-containing protein At4g19440, chloroplastic">
    <location>
        <begin position="33"/>
        <end position="838"/>
    </location>
</feature>
<feature type="repeat" description="PPR 1">
    <location>
        <begin position="238"/>
        <end position="268"/>
    </location>
</feature>
<feature type="repeat" description="PPR 2">
    <location>
        <begin position="272"/>
        <end position="306"/>
    </location>
</feature>
<feature type="repeat" description="PPR 3">
    <location>
        <begin position="307"/>
        <end position="341"/>
    </location>
</feature>
<feature type="repeat" description="PPR 4">
    <location>
        <begin position="342"/>
        <end position="376"/>
    </location>
</feature>
<feature type="repeat" description="PPR 5">
    <location>
        <begin position="377"/>
        <end position="411"/>
    </location>
</feature>
<feature type="repeat" description="PPR 6">
    <location>
        <begin position="412"/>
        <end position="446"/>
    </location>
</feature>
<feature type="repeat" description="PPR 7">
    <location>
        <begin position="447"/>
        <end position="481"/>
    </location>
</feature>
<feature type="repeat" description="PPR 8">
    <location>
        <begin position="482"/>
        <end position="516"/>
    </location>
</feature>
<feature type="repeat" description="PPR 9">
    <location>
        <begin position="517"/>
        <end position="551"/>
    </location>
</feature>
<feature type="repeat" description="PPR 10">
    <location>
        <begin position="552"/>
        <end position="586"/>
    </location>
</feature>
<feature type="repeat" description="PPR 11">
    <location>
        <begin position="587"/>
        <end position="621"/>
    </location>
</feature>
<feature type="repeat" description="PPR 12">
    <location>
        <begin position="622"/>
        <end position="656"/>
    </location>
</feature>
<feature type="repeat" description="PPR 13">
    <location>
        <begin position="657"/>
        <end position="691"/>
    </location>
</feature>
<feature type="repeat" description="PPR 14">
    <location>
        <begin position="692"/>
        <end position="726"/>
    </location>
</feature>
<feature type="repeat" description="PPR 15">
    <location>
        <begin position="727"/>
        <end position="761"/>
    </location>
</feature>
<feature type="repeat" description="PPR 16">
    <location>
        <begin position="762"/>
        <end position="796"/>
    </location>
</feature>
<protein>
    <recommendedName>
        <fullName>Pentatricopeptide repeat-containing protein At4g19440, chloroplastic</fullName>
    </recommendedName>
</protein>